<evidence type="ECO:0000255" key="1">
    <source>
        <dbReference type="HAMAP-Rule" id="MF_03123"/>
    </source>
</evidence>
<evidence type="ECO:0000255" key="2">
    <source>
        <dbReference type="PROSITE-ProRule" id="PRU01266"/>
    </source>
</evidence>
<feature type="transit peptide" description="Mitochondrion" evidence="1">
    <location>
        <begin position="1"/>
        <end position="26"/>
    </location>
</feature>
<feature type="chain" id="PRO_0000332311" description="Lipoyl synthase, mitochondrial">
    <location>
        <begin position="27"/>
        <end position="373"/>
    </location>
</feature>
<feature type="domain" description="Radical SAM core" evidence="2">
    <location>
        <begin position="121"/>
        <end position="340"/>
    </location>
</feature>
<feature type="binding site" evidence="1">
    <location>
        <position position="105"/>
    </location>
    <ligand>
        <name>[4Fe-4S] cluster</name>
        <dbReference type="ChEBI" id="CHEBI:49883"/>
        <label>1</label>
    </ligand>
</feature>
<feature type="binding site" evidence="1">
    <location>
        <position position="110"/>
    </location>
    <ligand>
        <name>[4Fe-4S] cluster</name>
        <dbReference type="ChEBI" id="CHEBI:49883"/>
        <label>1</label>
    </ligand>
</feature>
<feature type="binding site" evidence="1">
    <location>
        <position position="116"/>
    </location>
    <ligand>
        <name>[4Fe-4S] cluster</name>
        <dbReference type="ChEBI" id="CHEBI:49883"/>
        <label>1</label>
    </ligand>
</feature>
<feature type="binding site" evidence="1">
    <location>
        <position position="136"/>
    </location>
    <ligand>
        <name>[4Fe-4S] cluster</name>
        <dbReference type="ChEBI" id="CHEBI:49883"/>
        <label>2</label>
        <note>4Fe-4S-S-AdoMet</note>
    </ligand>
</feature>
<feature type="binding site" evidence="1">
    <location>
        <position position="140"/>
    </location>
    <ligand>
        <name>[4Fe-4S] cluster</name>
        <dbReference type="ChEBI" id="CHEBI:49883"/>
        <label>2</label>
        <note>4Fe-4S-S-AdoMet</note>
    </ligand>
</feature>
<feature type="binding site" evidence="1">
    <location>
        <position position="143"/>
    </location>
    <ligand>
        <name>[4Fe-4S] cluster</name>
        <dbReference type="ChEBI" id="CHEBI:49883"/>
        <label>2</label>
        <note>4Fe-4S-S-AdoMet</note>
    </ligand>
</feature>
<feature type="binding site" evidence="1">
    <location>
        <position position="351"/>
    </location>
    <ligand>
        <name>[4Fe-4S] cluster</name>
        <dbReference type="ChEBI" id="CHEBI:49883"/>
        <label>1</label>
    </ligand>
</feature>
<reference key="1">
    <citation type="journal article" date="2004" name="Genome Res.">
        <title>The status, quality, and expansion of the NIH full-length cDNA project: the Mammalian Gene Collection (MGC).</title>
        <authorList>
            <consortium name="The MGC Project Team"/>
        </authorList>
    </citation>
    <scope>NUCLEOTIDE SEQUENCE [LARGE SCALE MRNA]</scope>
    <source>
        <tissue>Heart</tissue>
    </source>
</reference>
<name>LIAS_RAT</name>
<comment type="function">
    <text evidence="1">Catalyzes the radical-mediated insertion of two sulfur atoms into the C-6 and C-8 positions of the octanoyl moiety bound to the lipoyl domains of lipoate-dependent enzymes, thereby converting the octanoylated domains into lipoylated derivatives.</text>
</comment>
<comment type="catalytic activity">
    <reaction evidence="1">
        <text>[[Fe-S] cluster scaffold protein carrying a second [4Fe-4S](2+) cluster] + N(6)-octanoyl-L-lysyl-[protein] + 2 oxidized [2Fe-2S]-[ferredoxin] + 2 S-adenosyl-L-methionine + 4 H(+) = [[Fe-S] cluster scaffold protein] + N(6)-[(R)-dihydrolipoyl]-L-lysyl-[protein] + 4 Fe(3+) + 2 hydrogen sulfide + 2 5'-deoxyadenosine + 2 L-methionine + 2 reduced [2Fe-2S]-[ferredoxin]</text>
        <dbReference type="Rhea" id="RHEA:16585"/>
        <dbReference type="Rhea" id="RHEA-COMP:9928"/>
        <dbReference type="Rhea" id="RHEA-COMP:10000"/>
        <dbReference type="Rhea" id="RHEA-COMP:10001"/>
        <dbReference type="Rhea" id="RHEA-COMP:10475"/>
        <dbReference type="Rhea" id="RHEA-COMP:14568"/>
        <dbReference type="Rhea" id="RHEA-COMP:14569"/>
        <dbReference type="ChEBI" id="CHEBI:15378"/>
        <dbReference type="ChEBI" id="CHEBI:17319"/>
        <dbReference type="ChEBI" id="CHEBI:29034"/>
        <dbReference type="ChEBI" id="CHEBI:29919"/>
        <dbReference type="ChEBI" id="CHEBI:33722"/>
        <dbReference type="ChEBI" id="CHEBI:33737"/>
        <dbReference type="ChEBI" id="CHEBI:33738"/>
        <dbReference type="ChEBI" id="CHEBI:57844"/>
        <dbReference type="ChEBI" id="CHEBI:59789"/>
        <dbReference type="ChEBI" id="CHEBI:78809"/>
        <dbReference type="ChEBI" id="CHEBI:83100"/>
        <dbReference type="EC" id="2.8.1.8"/>
    </reaction>
</comment>
<comment type="cofactor">
    <cofactor evidence="1">
        <name>[4Fe-4S] cluster</name>
        <dbReference type="ChEBI" id="CHEBI:49883"/>
    </cofactor>
    <text evidence="1">Binds 2 [4Fe-4S] clusters per subunit. One cluster is coordinated with 3 cysteines and an exchangeable S-adenosyl-L-methionine.</text>
</comment>
<comment type="pathway">
    <text evidence="1">Protein modification; protein lipoylation via endogenous pathway; protein N(6)-(lipoyl)lysine from octanoyl-[acyl-carrier-protein]: step 2/2.</text>
</comment>
<comment type="subcellular location">
    <subcellularLocation>
        <location evidence="1">Mitochondrion</location>
    </subcellularLocation>
</comment>
<comment type="similarity">
    <text evidence="1">Belongs to the radical SAM superfamily. Lipoyl synthase family.</text>
</comment>
<gene>
    <name type="primary">Lias</name>
</gene>
<organism>
    <name type="scientific">Rattus norvegicus</name>
    <name type="common">Rat</name>
    <dbReference type="NCBI Taxonomy" id="10116"/>
    <lineage>
        <taxon>Eukaryota</taxon>
        <taxon>Metazoa</taxon>
        <taxon>Chordata</taxon>
        <taxon>Craniata</taxon>
        <taxon>Vertebrata</taxon>
        <taxon>Euteleostomi</taxon>
        <taxon>Mammalia</taxon>
        <taxon>Eutheria</taxon>
        <taxon>Euarchontoglires</taxon>
        <taxon>Glires</taxon>
        <taxon>Rodentia</taxon>
        <taxon>Myomorpha</taxon>
        <taxon>Muroidea</taxon>
        <taxon>Muridae</taxon>
        <taxon>Murinae</taxon>
        <taxon>Rattus</taxon>
    </lineage>
</organism>
<dbReference type="EC" id="2.8.1.8" evidence="1"/>
<dbReference type="EMBL" id="BC083708">
    <property type="protein sequence ID" value="AAH83708.1"/>
    <property type="molecule type" value="mRNA"/>
</dbReference>
<dbReference type="RefSeq" id="NP_001012037.1">
    <property type="nucleotide sequence ID" value="NM_001012037.1"/>
</dbReference>
<dbReference type="SMR" id="Q5XIH4"/>
<dbReference type="FunCoup" id="Q5XIH4">
    <property type="interactions" value="2212"/>
</dbReference>
<dbReference type="STRING" id="10116.ENSRNOP00000003779"/>
<dbReference type="iPTMnet" id="Q5XIH4"/>
<dbReference type="PhosphoSitePlus" id="Q5XIH4"/>
<dbReference type="SwissPalm" id="Q5XIH4"/>
<dbReference type="PaxDb" id="10116-ENSRNOP00000003779"/>
<dbReference type="Ensembl" id="ENSRNOT00000003779.5">
    <property type="protein sequence ID" value="ENSRNOP00000003779.3"/>
    <property type="gene ID" value="ENSRNOG00000002759.5"/>
</dbReference>
<dbReference type="GeneID" id="305348"/>
<dbReference type="KEGG" id="rno:305348"/>
<dbReference type="AGR" id="RGD:1307270"/>
<dbReference type="CTD" id="11019"/>
<dbReference type="RGD" id="1307270">
    <property type="gene designation" value="Lias"/>
</dbReference>
<dbReference type="eggNOG" id="KOG2672">
    <property type="taxonomic scope" value="Eukaryota"/>
</dbReference>
<dbReference type="GeneTree" id="ENSGT00390000006234"/>
<dbReference type="HOGENOM" id="CLU_033144_2_0_1"/>
<dbReference type="InParanoid" id="Q5XIH4"/>
<dbReference type="OMA" id="PYCDIDF"/>
<dbReference type="OrthoDB" id="3231at2759"/>
<dbReference type="PhylomeDB" id="Q5XIH4"/>
<dbReference type="TreeFam" id="TF300817"/>
<dbReference type="Reactome" id="R-RNO-9857492">
    <property type="pathway name" value="Protein lipoylation"/>
</dbReference>
<dbReference type="UniPathway" id="UPA00538">
    <property type="reaction ID" value="UER00593"/>
</dbReference>
<dbReference type="PRO" id="PR:Q5XIH4"/>
<dbReference type="Proteomes" id="UP000002494">
    <property type="component" value="Chromosome 14"/>
</dbReference>
<dbReference type="Bgee" id="ENSRNOG00000002759">
    <property type="expression patterns" value="Expressed in heart and 20 other cell types or tissues"/>
</dbReference>
<dbReference type="GO" id="GO:0005739">
    <property type="term" value="C:mitochondrion"/>
    <property type="evidence" value="ECO:0000266"/>
    <property type="project" value="RGD"/>
</dbReference>
<dbReference type="GO" id="GO:0051539">
    <property type="term" value="F:4 iron, 4 sulfur cluster binding"/>
    <property type="evidence" value="ECO:0007669"/>
    <property type="project" value="UniProtKB-UniRule"/>
</dbReference>
<dbReference type="GO" id="GO:0016992">
    <property type="term" value="F:lipoate synthase activity"/>
    <property type="evidence" value="ECO:0000266"/>
    <property type="project" value="RGD"/>
</dbReference>
<dbReference type="GO" id="GO:0046872">
    <property type="term" value="F:metal ion binding"/>
    <property type="evidence" value="ECO:0007669"/>
    <property type="project" value="UniProtKB-KW"/>
</dbReference>
<dbReference type="GO" id="GO:0006954">
    <property type="term" value="P:inflammatory response"/>
    <property type="evidence" value="ECO:0000266"/>
    <property type="project" value="RGD"/>
</dbReference>
<dbReference type="GO" id="GO:0009107">
    <property type="term" value="P:lipoate biosynthetic process"/>
    <property type="evidence" value="ECO:0000266"/>
    <property type="project" value="RGD"/>
</dbReference>
<dbReference type="GO" id="GO:0001843">
    <property type="term" value="P:neural tube closure"/>
    <property type="evidence" value="ECO:0000266"/>
    <property type="project" value="RGD"/>
</dbReference>
<dbReference type="GO" id="GO:0032496">
    <property type="term" value="P:response to lipopolysaccharide"/>
    <property type="evidence" value="ECO:0000266"/>
    <property type="project" value="RGD"/>
</dbReference>
<dbReference type="GO" id="GO:0006979">
    <property type="term" value="P:response to oxidative stress"/>
    <property type="evidence" value="ECO:0000266"/>
    <property type="project" value="RGD"/>
</dbReference>
<dbReference type="CDD" id="cd01335">
    <property type="entry name" value="Radical_SAM"/>
    <property type="match status" value="1"/>
</dbReference>
<dbReference type="FunFam" id="3.20.20.70:FF:000036">
    <property type="entry name" value="Lipoyl synthase, mitochondrial"/>
    <property type="match status" value="1"/>
</dbReference>
<dbReference type="Gene3D" id="3.20.20.70">
    <property type="entry name" value="Aldolase class I"/>
    <property type="match status" value="1"/>
</dbReference>
<dbReference type="HAMAP" id="MF_00206">
    <property type="entry name" value="Lipoyl_synth"/>
    <property type="match status" value="1"/>
</dbReference>
<dbReference type="InterPro" id="IPR013785">
    <property type="entry name" value="Aldolase_TIM"/>
</dbReference>
<dbReference type="InterPro" id="IPR006638">
    <property type="entry name" value="Elp3/MiaA/NifB-like_rSAM"/>
</dbReference>
<dbReference type="InterPro" id="IPR031691">
    <property type="entry name" value="LIAS_N"/>
</dbReference>
<dbReference type="InterPro" id="IPR003698">
    <property type="entry name" value="Lipoyl_synth"/>
</dbReference>
<dbReference type="InterPro" id="IPR007197">
    <property type="entry name" value="rSAM"/>
</dbReference>
<dbReference type="NCBIfam" id="TIGR00510">
    <property type="entry name" value="lipA"/>
    <property type="match status" value="1"/>
</dbReference>
<dbReference type="NCBIfam" id="NF004019">
    <property type="entry name" value="PRK05481.1"/>
    <property type="match status" value="1"/>
</dbReference>
<dbReference type="NCBIfam" id="NF009544">
    <property type="entry name" value="PRK12928.1"/>
    <property type="match status" value="1"/>
</dbReference>
<dbReference type="PANTHER" id="PTHR10949">
    <property type="entry name" value="LIPOYL SYNTHASE"/>
    <property type="match status" value="1"/>
</dbReference>
<dbReference type="PANTHER" id="PTHR10949:SF0">
    <property type="entry name" value="LIPOYL SYNTHASE, MITOCHONDRIAL"/>
    <property type="match status" value="1"/>
</dbReference>
<dbReference type="Pfam" id="PF16881">
    <property type="entry name" value="LIAS_N"/>
    <property type="match status" value="1"/>
</dbReference>
<dbReference type="Pfam" id="PF04055">
    <property type="entry name" value="Radical_SAM"/>
    <property type="match status" value="1"/>
</dbReference>
<dbReference type="PIRSF" id="PIRSF005963">
    <property type="entry name" value="Lipoyl_synth"/>
    <property type="match status" value="1"/>
</dbReference>
<dbReference type="SFLD" id="SFLDF00271">
    <property type="entry name" value="lipoyl_synthase"/>
    <property type="match status" value="1"/>
</dbReference>
<dbReference type="SFLD" id="SFLDG01058">
    <property type="entry name" value="lipoyl_synthase_like"/>
    <property type="match status" value="1"/>
</dbReference>
<dbReference type="SMART" id="SM00729">
    <property type="entry name" value="Elp3"/>
    <property type="match status" value="1"/>
</dbReference>
<dbReference type="SUPFAM" id="SSF102114">
    <property type="entry name" value="Radical SAM enzymes"/>
    <property type="match status" value="1"/>
</dbReference>
<dbReference type="PROSITE" id="PS51918">
    <property type="entry name" value="RADICAL_SAM"/>
    <property type="match status" value="1"/>
</dbReference>
<sequence length="373" mass="41874">MALRCWDAARSLGSRIFGRYACSVRALSSLPDEKKKFLHNGPDLQDFVSGDLADKSTWDDYKGNLKRQKGERLRLPPWLKTKIPMGKNYNKLKNTLRNLNLHTVCEEARCPNIGECWGGGEYATATATIMLMGDTCTRGCRFCSVKTARNPPPLDPSEPDNTARAIAEWGLDYVVLTSVDRDDVVDGGAEHIAKTVSCLKERNPKILVECLTPDFRGDLRAVEKVALSGLDVYAHNVETVPELQRKVRDPRANFDQSLRVLKHAKEVQPDVVSKTSIMLGLGETDEQVYATMKALRAADVDCLTLGQYMQPTKRHLKVEEYVTPEKFKYWEEVGNELGFHYTASGPLVRSSYKAGEFFLKNLVAKRKTKVSKV</sequence>
<protein>
    <recommendedName>
        <fullName evidence="1">Lipoyl synthase, mitochondrial</fullName>
        <ecNumber evidence="1">2.8.1.8</ecNumber>
    </recommendedName>
    <alternativeName>
        <fullName evidence="1">Lipoate synthase</fullName>
        <shortName evidence="1">LS</shortName>
        <shortName evidence="1">Lip-syn</shortName>
    </alternativeName>
    <alternativeName>
        <fullName evidence="1">Lipoic acid synthase</fullName>
    </alternativeName>
</protein>
<accession>Q5XIH4</accession>
<keyword id="KW-0004">4Fe-4S</keyword>
<keyword id="KW-0408">Iron</keyword>
<keyword id="KW-0411">Iron-sulfur</keyword>
<keyword id="KW-0479">Metal-binding</keyword>
<keyword id="KW-0496">Mitochondrion</keyword>
<keyword id="KW-1185">Reference proteome</keyword>
<keyword id="KW-0949">S-adenosyl-L-methionine</keyword>
<keyword id="KW-0808">Transferase</keyword>
<keyword id="KW-0809">Transit peptide</keyword>
<proteinExistence type="evidence at transcript level"/>